<sequence>MSKDDSIKKTVTIGLSAAIFFVLSCFASIPVGFNVSIETSVAFLAFIAVAFGPAVGFYVGLIGNTIKDFILFGNVSWNWVLCSALIGFIYGLPHKIIDLKYQVFTKKKIVYFWLYQVAFNFIIWGFFAPQSDLLIYGQPPKLVYLQSFLIVISNILAYSVVGIKLMSMYSCHYNKQATLIKINNS</sequence>
<protein>
    <recommendedName>
        <fullName evidence="1">UPF0397 protein PAM_019</fullName>
    </recommendedName>
</protein>
<comment type="subcellular location">
    <subcellularLocation>
        <location evidence="1">Cell membrane</location>
        <topology evidence="1">Multi-pass membrane protein</topology>
    </subcellularLocation>
</comment>
<comment type="similarity">
    <text evidence="1">Belongs to the UPF0397 family.</text>
</comment>
<comment type="sequence caution" evidence="2">
    <conflict type="erroneous initiation">
        <sequence resource="EMBL-CDS" id="BAD04104"/>
    </conflict>
</comment>
<evidence type="ECO:0000255" key="1">
    <source>
        <dbReference type="HAMAP-Rule" id="MF_01572"/>
    </source>
</evidence>
<evidence type="ECO:0000305" key="2"/>
<keyword id="KW-1003">Cell membrane</keyword>
<keyword id="KW-0472">Membrane</keyword>
<keyword id="KW-0812">Transmembrane</keyword>
<keyword id="KW-1133">Transmembrane helix</keyword>
<accession>Q6YRJ5</accession>
<organism>
    <name type="scientific">Onion yellows phytoplasma (strain OY-M)</name>
    <dbReference type="NCBI Taxonomy" id="262768"/>
    <lineage>
        <taxon>Bacteria</taxon>
        <taxon>Bacillati</taxon>
        <taxon>Mycoplasmatota</taxon>
        <taxon>Mollicutes</taxon>
        <taxon>Acholeplasmatales</taxon>
        <taxon>Acholeplasmataceae</taxon>
        <taxon>Candidatus Phytoplasma</taxon>
        <taxon>16SrI (Aster yellows group)</taxon>
    </lineage>
</organism>
<gene>
    <name type="ordered locus">PAM_019</name>
</gene>
<proteinExistence type="inferred from homology"/>
<reference key="1">
    <citation type="journal article" date="2004" name="Nat. Genet.">
        <title>Reductive evolution suggested from the complete genome sequence of a plant-pathogenic phytoplasma.</title>
        <authorList>
            <person name="Oshima K."/>
            <person name="Kakizawa S."/>
            <person name="Nishigawa H."/>
            <person name="Jung H.-Y."/>
            <person name="Wei W."/>
            <person name="Suzuki S."/>
            <person name="Arashida R."/>
            <person name="Nakata D."/>
            <person name="Miyata S."/>
            <person name="Ugaki M."/>
            <person name="Namba S."/>
        </authorList>
    </citation>
    <scope>NUCLEOTIDE SEQUENCE [LARGE SCALE GENOMIC DNA]</scope>
    <source>
        <strain>OY-M</strain>
    </source>
</reference>
<feature type="chain" id="PRO_0000260799" description="UPF0397 protein PAM_019">
    <location>
        <begin position="1"/>
        <end position="185"/>
    </location>
</feature>
<feature type="transmembrane region" description="Helical" evidence="1">
    <location>
        <begin position="13"/>
        <end position="33"/>
    </location>
</feature>
<feature type="transmembrane region" description="Helical" evidence="1">
    <location>
        <begin position="42"/>
        <end position="62"/>
    </location>
</feature>
<feature type="transmembrane region" description="Helical" evidence="1">
    <location>
        <begin position="69"/>
        <end position="89"/>
    </location>
</feature>
<feature type="transmembrane region" description="Helical" evidence="1">
    <location>
        <begin position="109"/>
        <end position="129"/>
    </location>
</feature>
<feature type="transmembrane region" description="Helical" evidence="1">
    <location>
        <begin position="143"/>
        <end position="163"/>
    </location>
</feature>
<dbReference type="EMBL" id="AP006628">
    <property type="protein sequence ID" value="BAD04104.1"/>
    <property type="status" value="ALT_INIT"/>
    <property type="molecule type" value="Genomic_DNA"/>
</dbReference>
<dbReference type="SMR" id="Q6YRJ5"/>
<dbReference type="STRING" id="262768.PAM_019"/>
<dbReference type="KEGG" id="poy:PAM_019"/>
<dbReference type="eggNOG" id="COG4720">
    <property type="taxonomic scope" value="Bacteria"/>
</dbReference>
<dbReference type="HOGENOM" id="CLU_120023_0_0_14"/>
<dbReference type="BioCyc" id="OYEL262768:G1G26-24-MONOMER"/>
<dbReference type="Proteomes" id="UP000002523">
    <property type="component" value="Chromosome"/>
</dbReference>
<dbReference type="GO" id="GO:0005886">
    <property type="term" value="C:plasma membrane"/>
    <property type="evidence" value="ECO:0007669"/>
    <property type="project" value="UniProtKB-SubCell"/>
</dbReference>
<dbReference type="Gene3D" id="1.10.1760.20">
    <property type="match status" value="1"/>
</dbReference>
<dbReference type="HAMAP" id="MF_01572">
    <property type="entry name" value="UPF0397"/>
    <property type="match status" value="1"/>
</dbReference>
<dbReference type="InterPro" id="IPR009825">
    <property type="entry name" value="ECF_substrate-spec-like"/>
</dbReference>
<dbReference type="InterPro" id="IPR022914">
    <property type="entry name" value="UPF0397"/>
</dbReference>
<dbReference type="NCBIfam" id="NF010182">
    <property type="entry name" value="PRK13661.1"/>
    <property type="match status" value="1"/>
</dbReference>
<dbReference type="PANTHER" id="PTHR37815">
    <property type="entry name" value="UPF0397 PROTEIN BC_2624-RELATED"/>
    <property type="match status" value="1"/>
</dbReference>
<dbReference type="PANTHER" id="PTHR37815:SF3">
    <property type="entry name" value="UPF0397 PROTEIN SPR0429"/>
    <property type="match status" value="1"/>
</dbReference>
<dbReference type="Pfam" id="PF07155">
    <property type="entry name" value="ECF-ribofla_trS"/>
    <property type="match status" value="1"/>
</dbReference>
<name>Y019_ONYPE</name>